<reference key="1">
    <citation type="journal article" date="2009" name="Genome Biol.">
        <title>Genomic and genetic analyses of diversity and plant interactions of Pseudomonas fluorescens.</title>
        <authorList>
            <person name="Silby M.W."/>
            <person name="Cerdeno-Tarraga A.M."/>
            <person name="Vernikos G.S."/>
            <person name="Giddens S.R."/>
            <person name="Jackson R.W."/>
            <person name="Preston G.M."/>
            <person name="Zhang X.-X."/>
            <person name="Moon C.D."/>
            <person name="Gehrig S.M."/>
            <person name="Godfrey S.A.C."/>
            <person name="Knight C.G."/>
            <person name="Malone J.G."/>
            <person name="Robinson Z."/>
            <person name="Spiers A.J."/>
            <person name="Harris S."/>
            <person name="Challis G.L."/>
            <person name="Yaxley A.M."/>
            <person name="Harris D."/>
            <person name="Seeger K."/>
            <person name="Murphy L."/>
            <person name="Rutter S."/>
            <person name="Squares R."/>
            <person name="Quail M.A."/>
            <person name="Saunders E."/>
            <person name="Mavromatis K."/>
            <person name="Brettin T.S."/>
            <person name="Bentley S.D."/>
            <person name="Hothersall J."/>
            <person name="Stephens E."/>
            <person name="Thomas C.M."/>
            <person name="Parkhill J."/>
            <person name="Levy S.B."/>
            <person name="Rainey P.B."/>
            <person name="Thomson N.R."/>
        </authorList>
    </citation>
    <scope>NUCLEOTIDE SEQUENCE [LARGE SCALE GENOMIC DNA]</scope>
    <source>
        <strain>SBW25</strain>
    </source>
</reference>
<keyword id="KW-0028">Amino-acid biosynthesis</keyword>
<keyword id="KW-0057">Aromatic amino acid biosynthesis</keyword>
<keyword id="KW-0210">Decarboxylase</keyword>
<keyword id="KW-0456">Lyase</keyword>
<keyword id="KW-0822">Tryptophan biosynthesis</keyword>
<comment type="catalytic activity">
    <reaction evidence="1">
        <text>1-(2-carboxyphenylamino)-1-deoxy-D-ribulose 5-phosphate + H(+) = (1S,2R)-1-C-(indol-3-yl)glycerol 3-phosphate + CO2 + H2O</text>
        <dbReference type="Rhea" id="RHEA:23476"/>
        <dbReference type="ChEBI" id="CHEBI:15377"/>
        <dbReference type="ChEBI" id="CHEBI:15378"/>
        <dbReference type="ChEBI" id="CHEBI:16526"/>
        <dbReference type="ChEBI" id="CHEBI:58613"/>
        <dbReference type="ChEBI" id="CHEBI:58866"/>
        <dbReference type="EC" id="4.1.1.48"/>
    </reaction>
</comment>
<comment type="pathway">
    <text evidence="1">Amino-acid biosynthesis; L-tryptophan biosynthesis; L-tryptophan from chorismate: step 4/5.</text>
</comment>
<comment type="similarity">
    <text evidence="1">Belongs to the TrpC family.</text>
</comment>
<sequence length="278" mass="30271">MSVPTVLEKILARKAEEVAERRARVSLAELEAQAKVADAPRGFANALIAQAKLKQPAVIAEVKKASPSKGVIREIFIPEDIAKSYEKGGATCLSVLTDIDYFQGSDLFLQQARAACKLPVIRKDFMVDPYQIVEARALGADCVLLIVSALDDVKMAELAAVAKSVGLDVLVEVHDGDELERALKTLDTPLVGVNNRNLHTFEVSLENTLDLLPRIPRDRLVITESGIVNRADVELMEISGVYSFLVGETFMRAENPGAELQRLFFPERGVAVSGSTLD</sequence>
<dbReference type="EC" id="4.1.1.48" evidence="1"/>
<dbReference type="EMBL" id="AM181176">
    <property type="protein sequence ID" value="CAY52814.1"/>
    <property type="molecule type" value="Genomic_DNA"/>
</dbReference>
<dbReference type="RefSeq" id="WP_015886155.1">
    <property type="nucleotide sequence ID" value="NC_012660.1"/>
</dbReference>
<dbReference type="SMR" id="C3K307"/>
<dbReference type="STRING" id="294.SRM1_05216"/>
<dbReference type="GeneID" id="93467189"/>
<dbReference type="eggNOG" id="COG0134">
    <property type="taxonomic scope" value="Bacteria"/>
</dbReference>
<dbReference type="HOGENOM" id="CLU_034247_2_0_6"/>
<dbReference type="OrthoDB" id="9804217at2"/>
<dbReference type="UniPathway" id="UPA00035">
    <property type="reaction ID" value="UER00043"/>
</dbReference>
<dbReference type="GO" id="GO:0004425">
    <property type="term" value="F:indole-3-glycerol-phosphate synthase activity"/>
    <property type="evidence" value="ECO:0007669"/>
    <property type="project" value="UniProtKB-UniRule"/>
</dbReference>
<dbReference type="GO" id="GO:0004640">
    <property type="term" value="F:phosphoribosylanthranilate isomerase activity"/>
    <property type="evidence" value="ECO:0007669"/>
    <property type="project" value="TreeGrafter"/>
</dbReference>
<dbReference type="GO" id="GO:0000162">
    <property type="term" value="P:L-tryptophan biosynthetic process"/>
    <property type="evidence" value="ECO:0007669"/>
    <property type="project" value="UniProtKB-UniRule"/>
</dbReference>
<dbReference type="CDD" id="cd00331">
    <property type="entry name" value="IGPS"/>
    <property type="match status" value="1"/>
</dbReference>
<dbReference type="FunFam" id="3.20.20.70:FF:000024">
    <property type="entry name" value="Indole-3-glycerol phosphate synthase"/>
    <property type="match status" value="1"/>
</dbReference>
<dbReference type="Gene3D" id="3.20.20.70">
    <property type="entry name" value="Aldolase class I"/>
    <property type="match status" value="1"/>
</dbReference>
<dbReference type="HAMAP" id="MF_00134_B">
    <property type="entry name" value="IGPS_B"/>
    <property type="match status" value="1"/>
</dbReference>
<dbReference type="InterPro" id="IPR013785">
    <property type="entry name" value="Aldolase_TIM"/>
</dbReference>
<dbReference type="InterPro" id="IPR045186">
    <property type="entry name" value="Indole-3-glycerol_P_synth"/>
</dbReference>
<dbReference type="InterPro" id="IPR013798">
    <property type="entry name" value="Indole-3-glycerol_P_synth_dom"/>
</dbReference>
<dbReference type="InterPro" id="IPR001468">
    <property type="entry name" value="Indole-3-GlycerolPSynthase_CS"/>
</dbReference>
<dbReference type="InterPro" id="IPR011060">
    <property type="entry name" value="RibuloseP-bd_barrel"/>
</dbReference>
<dbReference type="NCBIfam" id="NF001370">
    <property type="entry name" value="PRK00278.1-2"/>
    <property type="match status" value="1"/>
</dbReference>
<dbReference type="NCBIfam" id="NF001373">
    <property type="entry name" value="PRK00278.1-6"/>
    <property type="match status" value="1"/>
</dbReference>
<dbReference type="NCBIfam" id="NF001377">
    <property type="entry name" value="PRK00278.2-4"/>
    <property type="match status" value="1"/>
</dbReference>
<dbReference type="PANTHER" id="PTHR22854:SF2">
    <property type="entry name" value="INDOLE-3-GLYCEROL-PHOSPHATE SYNTHASE"/>
    <property type="match status" value="1"/>
</dbReference>
<dbReference type="PANTHER" id="PTHR22854">
    <property type="entry name" value="TRYPTOPHAN BIOSYNTHESIS PROTEIN"/>
    <property type="match status" value="1"/>
</dbReference>
<dbReference type="Pfam" id="PF00218">
    <property type="entry name" value="IGPS"/>
    <property type="match status" value="1"/>
</dbReference>
<dbReference type="SUPFAM" id="SSF51366">
    <property type="entry name" value="Ribulose-phoshate binding barrel"/>
    <property type="match status" value="1"/>
</dbReference>
<dbReference type="PROSITE" id="PS00614">
    <property type="entry name" value="IGPS"/>
    <property type="match status" value="1"/>
</dbReference>
<name>TRPC_PSEFS</name>
<protein>
    <recommendedName>
        <fullName evidence="1">Indole-3-glycerol phosphate synthase</fullName>
        <shortName evidence="1">IGPS</shortName>
        <ecNumber evidence="1">4.1.1.48</ecNumber>
    </recommendedName>
</protein>
<proteinExistence type="inferred from homology"/>
<feature type="chain" id="PRO_1000203204" description="Indole-3-glycerol phosphate synthase">
    <location>
        <begin position="1"/>
        <end position="278"/>
    </location>
</feature>
<gene>
    <name evidence="1" type="primary">trpC</name>
    <name type="ordered locus">PFLU_5558</name>
</gene>
<evidence type="ECO:0000255" key="1">
    <source>
        <dbReference type="HAMAP-Rule" id="MF_00134"/>
    </source>
</evidence>
<accession>C3K307</accession>
<organism>
    <name type="scientific">Pseudomonas fluorescens (strain SBW25)</name>
    <dbReference type="NCBI Taxonomy" id="216595"/>
    <lineage>
        <taxon>Bacteria</taxon>
        <taxon>Pseudomonadati</taxon>
        <taxon>Pseudomonadota</taxon>
        <taxon>Gammaproteobacteria</taxon>
        <taxon>Pseudomonadales</taxon>
        <taxon>Pseudomonadaceae</taxon>
        <taxon>Pseudomonas</taxon>
    </lineage>
</organism>